<reference key="1">
    <citation type="journal article" date="2004" name="Science">
        <title>Illuminating the evolutionary history of chlamydiae.</title>
        <authorList>
            <person name="Horn M."/>
            <person name="Collingro A."/>
            <person name="Schmitz-Esser S."/>
            <person name="Beier C.L."/>
            <person name="Purkhold U."/>
            <person name="Fartmann B."/>
            <person name="Brandt P."/>
            <person name="Nyakatura G.J."/>
            <person name="Droege M."/>
            <person name="Frishman D."/>
            <person name="Rattei T."/>
            <person name="Mewes H.-W."/>
            <person name="Wagner M."/>
        </authorList>
    </citation>
    <scope>NUCLEOTIDE SEQUENCE [LARGE SCALE GENOMIC DNA]</scope>
    <source>
        <strain>UWE25</strain>
    </source>
</reference>
<keyword id="KW-0648">Protein biosynthesis</keyword>
<keyword id="KW-1185">Reference proteome</keyword>
<keyword id="KW-0808">Transferase</keyword>
<dbReference type="EC" id="2.1.2.9" evidence="1"/>
<dbReference type="EMBL" id="BX908798">
    <property type="protein sequence ID" value="CAF23128.1"/>
    <property type="molecule type" value="Genomic_DNA"/>
</dbReference>
<dbReference type="SMR" id="Q6ME71"/>
<dbReference type="STRING" id="264201.pc0404"/>
<dbReference type="KEGG" id="pcu:PC_RS01980"/>
<dbReference type="eggNOG" id="COG0223">
    <property type="taxonomic scope" value="Bacteria"/>
</dbReference>
<dbReference type="HOGENOM" id="CLU_033347_1_1_0"/>
<dbReference type="OrthoDB" id="9802815at2"/>
<dbReference type="Proteomes" id="UP000000529">
    <property type="component" value="Chromosome"/>
</dbReference>
<dbReference type="GO" id="GO:0005829">
    <property type="term" value="C:cytosol"/>
    <property type="evidence" value="ECO:0007669"/>
    <property type="project" value="TreeGrafter"/>
</dbReference>
<dbReference type="GO" id="GO:0004479">
    <property type="term" value="F:methionyl-tRNA formyltransferase activity"/>
    <property type="evidence" value="ECO:0007669"/>
    <property type="project" value="UniProtKB-UniRule"/>
</dbReference>
<dbReference type="CDD" id="cd08646">
    <property type="entry name" value="FMT_core_Met-tRNA-FMT_N"/>
    <property type="match status" value="1"/>
</dbReference>
<dbReference type="CDD" id="cd08704">
    <property type="entry name" value="Met_tRNA_FMT_C"/>
    <property type="match status" value="1"/>
</dbReference>
<dbReference type="Gene3D" id="3.10.25.10">
    <property type="entry name" value="Formyl transferase, C-terminal domain"/>
    <property type="match status" value="1"/>
</dbReference>
<dbReference type="Gene3D" id="3.40.50.170">
    <property type="entry name" value="Formyl transferase, N-terminal domain"/>
    <property type="match status" value="1"/>
</dbReference>
<dbReference type="HAMAP" id="MF_00182">
    <property type="entry name" value="Formyl_trans"/>
    <property type="match status" value="1"/>
</dbReference>
<dbReference type="InterPro" id="IPR005794">
    <property type="entry name" value="Fmt"/>
</dbReference>
<dbReference type="InterPro" id="IPR005793">
    <property type="entry name" value="Formyl_trans_C"/>
</dbReference>
<dbReference type="InterPro" id="IPR037022">
    <property type="entry name" value="Formyl_trans_C_sf"/>
</dbReference>
<dbReference type="InterPro" id="IPR002376">
    <property type="entry name" value="Formyl_transf_N"/>
</dbReference>
<dbReference type="InterPro" id="IPR036477">
    <property type="entry name" value="Formyl_transf_N_sf"/>
</dbReference>
<dbReference type="InterPro" id="IPR011034">
    <property type="entry name" value="Formyl_transferase-like_C_sf"/>
</dbReference>
<dbReference type="InterPro" id="IPR044135">
    <property type="entry name" value="Met-tRNA-FMT_C"/>
</dbReference>
<dbReference type="InterPro" id="IPR041711">
    <property type="entry name" value="Met-tRNA-FMT_N"/>
</dbReference>
<dbReference type="NCBIfam" id="TIGR00460">
    <property type="entry name" value="fmt"/>
    <property type="match status" value="1"/>
</dbReference>
<dbReference type="PANTHER" id="PTHR11138">
    <property type="entry name" value="METHIONYL-TRNA FORMYLTRANSFERASE"/>
    <property type="match status" value="1"/>
</dbReference>
<dbReference type="PANTHER" id="PTHR11138:SF5">
    <property type="entry name" value="METHIONYL-TRNA FORMYLTRANSFERASE, MITOCHONDRIAL"/>
    <property type="match status" value="1"/>
</dbReference>
<dbReference type="Pfam" id="PF02911">
    <property type="entry name" value="Formyl_trans_C"/>
    <property type="match status" value="1"/>
</dbReference>
<dbReference type="Pfam" id="PF00551">
    <property type="entry name" value="Formyl_trans_N"/>
    <property type="match status" value="1"/>
</dbReference>
<dbReference type="SUPFAM" id="SSF50486">
    <property type="entry name" value="FMT C-terminal domain-like"/>
    <property type="match status" value="1"/>
</dbReference>
<dbReference type="SUPFAM" id="SSF53328">
    <property type="entry name" value="Formyltransferase"/>
    <property type="match status" value="1"/>
</dbReference>
<comment type="function">
    <text evidence="1">Attaches a formyl group to the free amino group of methionyl-tRNA(fMet). The formyl group appears to play a dual role in the initiator identity of N-formylmethionyl-tRNA by promoting its recognition by IF2 and preventing the misappropriation of this tRNA by the elongation apparatus.</text>
</comment>
<comment type="catalytic activity">
    <reaction evidence="1">
        <text>L-methionyl-tRNA(fMet) + (6R)-10-formyltetrahydrofolate = N-formyl-L-methionyl-tRNA(fMet) + (6S)-5,6,7,8-tetrahydrofolate + H(+)</text>
        <dbReference type="Rhea" id="RHEA:24380"/>
        <dbReference type="Rhea" id="RHEA-COMP:9952"/>
        <dbReference type="Rhea" id="RHEA-COMP:9953"/>
        <dbReference type="ChEBI" id="CHEBI:15378"/>
        <dbReference type="ChEBI" id="CHEBI:57453"/>
        <dbReference type="ChEBI" id="CHEBI:78530"/>
        <dbReference type="ChEBI" id="CHEBI:78844"/>
        <dbReference type="ChEBI" id="CHEBI:195366"/>
        <dbReference type="EC" id="2.1.2.9"/>
    </reaction>
</comment>
<comment type="similarity">
    <text evidence="1">Belongs to the Fmt family.</text>
</comment>
<feature type="chain" id="PRO_0000083008" description="Methionyl-tRNA formyltransferase">
    <location>
        <begin position="1"/>
        <end position="318"/>
    </location>
</feature>
<feature type="binding site" evidence="1">
    <location>
        <begin position="114"/>
        <end position="117"/>
    </location>
    <ligand>
        <name>(6S)-5,6,7,8-tetrahydrofolate</name>
        <dbReference type="ChEBI" id="CHEBI:57453"/>
    </ligand>
</feature>
<name>FMT_PARUW</name>
<accession>Q6ME71</accession>
<protein>
    <recommendedName>
        <fullName evidence="1">Methionyl-tRNA formyltransferase</fullName>
        <ecNumber evidence="1">2.1.2.9</ecNumber>
    </recommendedName>
</protein>
<evidence type="ECO:0000255" key="1">
    <source>
        <dbReference type="HAMAP-Rule" id="MF_00182"/>
    </source>
</evidence>
<proteinExistence type="inferred from homology"/>
<organism>
    <name type="scientific">Protochlamydia amoebophila (strain UWE25)</name>
    <dbReference type="NCBI Taxonomy" id="264201"/>
    <lineage>
        <taxon>Bacteria</taxon>
        <taxon>Pseudomonadati</taxon>
        <taxon>Chlamydiota</taxon>
        <taxon>Chlamydiia</taxon>
        <taxon>Parachlamydiales</taxon>
        <taxon>Parachlamydiaceae</taxon>
        <taxon>Candidatus Protochlamydia</taxon>
    </lineage>
</organism>
<sequence>MRNRKMKVIFFGTPLFAAQVLEFLLQNQVEVVAVISKPDRPKGRSSIPVPTPVKLIAQSYHLPLYQPEVVSSLDFAPVLKNYEADLFVVVAYGEIIKQHLLDMPKRACINLHASLLPKYRGAAPIQRSIIEGEKETGVTIMHMVKKMDAGDMIKKVSVQITSEMTYGELEQALCQIGKHALLEVIKQFDRGEPSRQIQDSHLATFAPKIELEDCELDWNQSAQHLHDLVRGVNPYPGAWCYVKVNGEQKRLKISRTRVIPYPSNCPGTILDSSKGNLKILTGDQALELVEVQLEGKKTMTSEQWIRGMSKNQLKFLVN</sequence>
<gene>
    <name evidence="1" type="primary">fmt</name>
    <name type="ordered locus">pc0404</name>
</gene>